<reference key="1">
    <citation type="journal article" date="1989" name="Mol. Gen. Genet.">
        <title>Genes coding for the reversible ADP-ribosylation system of dinitrogenase reductase from Rhodospirillum rubrum.</title>
        <authorList>
            <person name="Fitzmaurice W.P."/>
            <person name="Saari L.L."/>
            <person name="Lowery R.G."/>
            <person name="Ludden P.W."/>
            <person name="Roberts G.P."/>
        </authorList>
    </citation>
    <scope>NUCLEOTIDE SEQUENCE [GENOMIC DNA]</scope>
    <scope>PROTEIN SEQUENCE OF 3-35 AND 36-38</scope>
    <source>
        <strain>UR2</strain>
    </source>
</reference>
<reference key="2">
    <citation type="journal article" date="1984" name="Biochim. Biophys. Acta">
        <title>Dependence on divalent cations of the activation of inactive Fe-protein of nitrogenase from Rhodospirillum rubrum.</title>
        <authorList>
            <person name="Nordlund S."/>
            <person name="Noren A."/>
        </authorList>
    </citation>
    <scope>COFACTOR</scope>
    <scope>SUBCELLULAR LOCATION</scope>
    <source>
        <strain>S1</strain>
    </source>
</reference>
<reference evidence="7 8 9" key="3">
    <citation type="journal article" date="2009" name="Proc. Natl. Acad. Sci. U.S.A.">
        <title>Mechanism of ADP-ribosylation removal revealed by the structure and ligand complexes of the dimanganese mono-ADP-ribosylhydrolase DraG.</title>
        <authorList>
            <person name="Berthold C.L."/>
            <person name="Wang H."/>
            <person name="Nordlund S."/>
            <person name="Hogbom M."/>
        </authorList>
    </citation>
    <scope>X-RAY CRYSTALLOGRAPHY (1.90 ANGSTROMS) HOLOENZYME; IN COMPLEX WITH ADP-RIBOSE AND A TRANSITION STATE ALL IN COMPLEX WITH MN(2+)</scope>
    <scope>FUNCTION</scope>
    <scope>CATALYTIC ACTIVITY</scope>
    <scope>REACTION MECHANISM</scope>
    <scope>SUBUNIT</scope>
    <scope>MUTAGENESIS OF GLU-28; LYS-54; ASP-60 AND ASP-97</scope>
    <source>
        <strain>S1</strain>
    </source>
</reference>
<sequence>MTGPSVHDRALGAFLGLAVGDALGATVEFMTKGEIAQQYGIHRKMTGGGWLRLKPGQITDDTEMSLALGRSLAAKGTLDVADICEEFALWLKSRPVDVGNTCRRGIRRYMHEGTTTAPYSEGDAGNGAAMRCLPAALATLGHPADLEPWVLAQARITHNHPLSDAACLTLGRMVHHLIGGRGMKACREEANRLVHQHRDFHFEPYKGQSSAYIVDTMQTVLHYYFVTDTFKSCLIQTVNQGGDADTTGALAGMLAGATYGVDDIPSGWLSKLDMKVEREIRRQVDALLALAGLD</sequence>
<accession>P14300</accession>
<evidence type="ECO:0000269" key="1">
    <source>
    </source>
</evidence>
<evidence type="ECO:0000269" key="2">
    <source ref="2"/>
</evidence>
<evidence type="ECO:0000303" key="3">
    <source>
    </source>
</evidence>
<evidence type="ECO:0000305" key="4"/>
<evidence type="ECO:0000305" key="5">
    <source>
    </source>
</evidence>
<evidence type="ECO:0000305" key="6">
    <source ref="2"/>
</evidence>
<evidence type="ECO:0007744" key="7">
    <source>
        <dbReference type="PDB" id="2WOC"/>
    </source>
</evidence>
<evidence type="ECO:0007744" key="8">
    <source>
        <dbReference type="PDB" id="2WOD"/>
    </source>
</evidence>
<evidence type="ECO:0007744" key="9">
    <source>
        <dbReference type="PDB" id="2WOE"/>
    </source>
</evidence>
<evidence type="ECO:0007829" key="10">
    <source>
        <dbReference type="PDB" id="2WOE"/>
    </source>
</evidence>
<name>DRAG_RHORU</name>
<proteinExistence type="evidence at protein level"/>
<feature type="chain" id="PRO_0000157286" description="ADP-ribosyl-[dinitrogen reductase] glycohydrolase">
    <location>
        <begin position="1"/>
        <end position="294"/>
    </location>
</feature>
<feature type="binding site" evidence="1">
    <location>
        <begin position="100"/>
        <end position="102"/>
    </location>
    <ligand>
        <name>ADP-D-ribose</name>
        <dbReference type="ChEBI" id="CHEBI:57967"/>
    </ligand>
</feature>
<feature type="binding site" evidence="1">
    <location>
        <position position="121"/>
    </location>
    <ligand>
        <name>ADP-D-ribose</name>
        <dbReference type="ChEBI" id="CHEBI:57967"/>
    </ligand>
</feature>
<feature type="binding site" evidence="1">
    <location>
        <position position="158"/>
    </location>
    <ligand>
        <name>ADP-D-ribose</name>
        <dbReference type="ChEBI" id="CHEBI:57967"/>
    </ligand>
</feature>
<feature type="binding site" evidence="1">
    <location>
        <position position="212"/>
    </location>
    <ligand>
        <name>ADP-D-ribose</name>
        <dbReference type="ChEBI" id="CHEBI:57967"/>
    </ligand>
</feature>
<feature type="binding site" evidence="1">
    <location>
        <position position="243"/>
    </location>
    <ligand>
        <name>Mn(2+)</name>
        <dbReference type="ChEBI" id="CHEBI:29035"/>
    </ligand>
</feature>
<feature type="binding site" evidence="5">
    <location>
        <position position="245"/>
    </location>
    <ligand>
        <name>Mn(2+)</name>
        <dbReference type="ChEBI" id="CHEBI:29035"/>
    </ligand>
</feature>
<feature type="binding site" evidence="1">
    <location>
        <position position="246"/>
    </location>
    <ligand>
        <name>Mn(2+)</name>
        <dbReference type="ChEBI" id="CHEBI:29035"/>
    </ligand>
</feature>
<feature type="mutagenesis site" description="Reduced enzymatic activity." evidence="1">
    <original>E</original>
    <variation>A</variation>
    <variation>D</variation>
    <variation>Q</variation>
    <location>
        <position position="28"/>
    </location>
</feature>
<feature type="mutagenesis site" description="Wild-type enzymatic activity." evidence="1">
    <original>K</original>
    <variation>A</variation>
    <variation>R</variation>
    <location>
        <position position="54"/>
    </location>
</feature>
<feature type="mutagenesis site" description="Loss of enzymatic activity." evidence="1">
    <original>D</original>
    <variation>A</variation>
    <variation>N</variation>
    <location>
        <position position="60"/>
    </location>
</feature>
<feature type="mutagenesis site" description="Loss of enzymatic activity." evidence="1">
    <original>D</original>
    <variation>A</variation>
    <variation>N</variation>
    <location>
        <position position="97"/>
    </location>
</feature>
<feature type="helix" evidence="10">
    <location>
        <begin position="6"/>
        <end position="25"/>
    </location>
</feature>
<feature type="turn" evidence="10">
    <location>
        <begin position="26"/>
        <end position="29"/>
    </location>
</feature>
<feature type="helix" evidence="10">
    <location>
        <begin position="32"/>
        <end position="39"/>
    </location>
</feature>
<feature type="turn" evidence="10">
    <location>
        <begin position="49"/>
        <end position="52"/>
    </location>
</feature>
<feature type="helix" evidence="10">
    <location>
        <begin position="60"/>
        <end position="75"/>
    </location>
</feature>
<feature type="helix" evidence="10">
    <location>
        <begin position="80"/>
        <end position="92"/>
    </location>
</feature>
<feature type="helix" evidence="10">
    <location>
        <begin position="100"/>
        <end position="112"/>
    </location>
</feature>
<feature type="helix" evidence="10">
    <location>
        <begin position="129"/>
        <end position="131"/>
    </location>
</feature>
<feature type="helix" evidence="10">
    <location>
        <begin position="133"/>
        <end position="138"/>
    </location>
</feature>
<feature type="turn" evidence="10">
    <location>
        <begin position="139"/>
        <end position="141"/>
    </location>
</feature>
<feature type="helix" evidence="10">
    <location>
        <begin position="143"/>
        <end position="145"/>
    </location>
</feature>
<feature type="helix" evidence="10">
    <location>
        <begin position="146"/>
        <end position="154"/>
    </location>
</feature>
<feature type="turn" evidence="10">
    <location>
        <begin position="155"/>
        <end position="157"/>
    </location>
</feature>
<feature type="helix" evidence="10">
    <location>
        <begin position="161"/>
        <end position="178"/>
    </location>
</feature>
<feature type="helix" evidence="10">
    <location>
        <begin position="182"/>
        <end position="196"/>
    </location>
</feature>
<feature type="helix" evidence="10">
    <location>
        <begin position="198"/>
        <end position="200"/>
    </location>
</feature>
<feature type="strand" evidence="10">
    <location>
        <begin position="210"/>
        <end position="212"/>
    </location>
</feature>
<feature type="helix" evidence="10">
    <location>
        <begin position="213"/>
        <end position="225"/>
    </location>
</feature>
<feature type="helix" evidence="10">
    <location>
        <begin position="230"/>
        <end position="239"/>
    </location>
</feature>
<feature type="strand" evidence="10">
    <location>
        <begin position="241"/>
        <end position="243"/>
    </location>
</feature>
<feature type="helix" evidence="10">
    <location>
        <begin position="244"/>
        <end position="259"/>
    </location>
</feature>
<feature type="helix" evidence="10">
    <location>
        <begin position="261"/>
        <end position="263"/>
    </location>
</feature>
<feature type="helix" evidence="10">
    <location>
        <begin position="266"/>
        <end position="269"/>
    </location>
</feature>
<feature type="helix" evidence="10">
    <location>
        <begin position="274"/>
        <end position="291"/>
    </location>
</feature>
<protein>
    <recommendedName>
        <fullName>ADP-ribosyl-[dinitrogen reductase] glycohydrolase</fullName>
        <shortName evidence="3">ADP-ribosylglycohydrolase</shortName>
        <ecNumber evidence="1">3.2.2.24</ecNumber>
    </recommendedName>
    <alternativeName>
        <fullName>Dinitrogenase reductase-activating glycohydrolase</fullName>
    </alternativeName>
    <alternativeName>
        <fullName>Mono-ADP-ribosylhydrolase</fullName>
    </alternativeName>
</protein>
<keyword id="KW-0002">3D-structure</keyword>
<keyword id="KW-0963">Cytoplasm</keyword>
<keyword id="KW-0903">Direct protein sequencing</keyword>
<keyword id="KW-0378">Hydrolase</keyword>
<keyword id="KW-0464">Manganese</keyword>
<keyword id="KW-0479">Metal-binding</keyword>
<keyword id="KW-0535">Nitrogen fixation</keyword>
<dbReference type="EC" id="3.2.2.24" evidence="1"/>
<dbReference type="EMBL" id="X16187">
    <property type="protein sequence ID" value="CAA34310.1"/>
    <property type="molecule type" value="Genomic_DNA"/>
</dbReference>
<dbReference type="PIR" id="JT0536">
    <property type="entry name" value="JT0536"/>
</dbReference>
<dbReference type="RefSeq" id="WP_011388763.1">
    <property type="nucleotide sequence ID" value="NZ_DAMDTZ010000026.1"/>
</dbReference>
<dbReference type="PDB" id="2WOC">
    <property type="method" value="X-ray"/>
    <property type="resolution" value="2.20 A"/>
    <property type="chains" value="A/B/C=1-294"/>
</dbReference>
<dbReference type="PDB" id="2WOD">
    <property type="method" value="X-ray"/>
    <property type="resolution" value="2.25 A"/>
    <property type="chains" value="A/B=1-294"/>
</dbReference>
<dbReference type="PDB" id="2WOE">
    <property type="method" value="X-ray"/>
    <property type="resolution" value="1.90 A"/>
    <property type="chains" value="A/B/C=1-294"/>
</dbReference>
<dbReference type="PDBsum" id="2WOC"/>
<dbReference type="PDBsum" id="2WOD"/>
<dbReference type="PDBsum" id="2WOE"/>
<dbReference type="SMR" id="P14300"/>
<dbReference type="OMA" id="PGTWTDD"/>
<dbReference type="BRENDA" id="3.2.2.24">
    <property type="organism ID" value="5420"/>
</dbReference>
<dbReference type="EvolutionaryTrace" id="P14300"/>
<dbReference type="GO" id="GO:0005737">
    <property type="term" value="C:cytoplasm"/>
    <property type="evidence" value="ECO:0007669"/>
    <property type="project" value="UniProtKB-SubCell"/>
</dbReference>
<dbReference type="GO" id="GO:0047407">
    <property type="term" value="F:ADP-ribosyl-[dinitrogen reductase] hydrolase activity"/>
    <property type="evidence" value="ECO:0007669"/>
    <property type="project" value="UniProtKB-EC"/>
</dbReference>
<dbReference type="GO" id="GO:0046872">
    <property type="term" value="F:metal ion binding"/>
    <property type="evidence" value="ECO:0007669"/>
    <property type="project" value="UniProtKB-KW"/>
</dbReference>
<dbReference type="GO" id="GO:0009399">
    <property type="term" value="P:nitrogen fixation"/>
    <property type="evidence" value="ECO:0007669"/>
    <property type="project" value="UniProtKB-KW"/>
</dbReference>
<dbReference type="GO" id="GO:0051725">
    <property type="term" value="P:protein de-ADP-ribosylation"/>
    <property type="evidence" value="ECO:0000315"/>
    <property type="project" value="CACAO"/>
</dbReference>
<dbReference type="FunFam" id="1.10.4080.10:FF:000003">
    <property type="entry name" value="ADP-ribosyl-[dinitrogen reductase] glycohydrolase"/>
    <property type="match status" value="1"/>
</dbReference>
<dbReference type="Gene3D" id="1.10.4080.10">
    <property type="entry name" value="ADP-ribosylation/Crystallin J1"/>
    <property type="match status" value="1"/>
</dbReference>
<dbReference type="InterPro" id="IPR013479">
    <property type="entry name" value="ADP-ribosyl_diN_reduct_hydro"/>
</dbReference>
<dbReference type="InterPro" id="IPR050792">
    <property type="entry name" value="ADP-ribosylglycohydrolase"/>
</dbReference>
<dbReference type="InterPro" id="IPR005502">
    <property type="entry name" value="Ribosyl_crysJ1"/>
</dbReference>
<dbReference type="InterPro" id="IPR036705">
    <property type="entry name" value="Ribosyl_crysJ1_sf"/>
</dbReference>
<dbReference type="NCBIfam" id="TIGR02662">
    <property type="entry name" value="dinitro_DRAG"/>
    <property type="match status" value="1"/>
</dbReference>
<dbReference type="PANTHER" id="PTHR16222">
    <property type="entry name" value="ADP-RIBOSYLGLYCOHYDROLASE"/>
    <property type="match status" value="1"/>
</dbReference>
<dbReference type="PANTHER" id="PTHR16222:SF12">
    <property type="entry name" value="ADP-RIBOSYLGLYCOHYDROLASE-RELATED"/>
    <property type="match status" value="1"/>
</dbReference>
<dbReference type="Pfam" id="PF03747">
    <property type="entry name" value="ADP_ribosyl_GH"/>
    <property type="match status" value="1"/>
</dbReference>
<dbReference type="SUPFAM" id="SSF101478">
    <property type="entry name" value="ADP-ribosylglycohydrolase"/>
    <property type="match status" value="1"/>
</dbReference>
<gene>
    <name evidence="3" type="primary">draG</name>
</gene>
<comment type="function">
    <text>Involved in the regulation of nitrogen fixation activity by the reversible ADP-ribosylation of one subunit of the homodimeric dinitrogenase reductase component of the nitrogenase enzyme complex. The ADP-ribosyltransferase (DraT) transfers the ADP-ribose group from NAD to dinitrogenase reductase. The ADP-ribose group is removed through the action of the ADP-ribosylglycohydrolase (DraG, this entry).</text>
</comment>
<comment type="catalytic activity">
    <reaction evidence="1">
        <text>N(omega)-alpha-(ADP-D-ribosyl)-L-arginyl-[dinitrogen reductase] + H2O = L-arginyl-[dinitrogen reductase] + ADP-D-ribose</text>
        <dbReference type="Rhea" id="RHEA:14493"/>
        <dbReference type="Rhea" id="RHEA-COMP:10789"/>
        <dbReference type="Rhea" id="RHEA-COMP:10791"/>
        <dbReference type="ChEBI" id="CHEBI:15377"/>
        <dbReference type="ChEBI" id="CHEBI:29965"/>
        <dbReference type="ChEBI" id="CHEBI:57967"/>
        <dbReference type="ChEBI" id="CHEBI:83960"/>
        <dbReference type="EC" id="3.2.2.24"/>
    </reaction>
</comment>
<comment type="cofactor">
    <cofactor evidence="1 2">
        <name>Mn(2+)</name>
        <dbReference type="ChEBI" id="CHEBI:29035"/>
    </cofactor>
    <text evidence="1 2">Mn(2+) and Fe(2+) serve as a cofactor, Mg(2+) is a very poor cofactor (Ref.2). Binds 2 Mn(2+) per monomer, with unusually long metal coordination distances so that neither is tightly bound (PubMed:19706507).</text>
</comment>
<comment type="subunit">
    <text evidence="1">Monomer.</text>
</comment>
<comment type="subcellular location">
    <subcellularLocation>
        <location evidence="6">Cytoplasm</location>
    </subcellularLocation>
</comment>
<comment type="similarity">
    <text evidence="4">Belongs to the ADP-ribosylglycohydrolase family.</text>
</comment>
<organism>
    <name type="scientific">Rhodospirillum rubrum</name>
    <dbReference type="NCBI Taxonomy" id="1085"/>
    <lineage>
        <taxon>Bacteria</taxon>
        <taxon>Pseudomonadati</taxon>
        <taxon>Pseudomonadota</taxon>
        <taxon>Alphaproteobacteria</taxon>
        <taxon>Rhodospirillales</taxon>
        <taxon>Rhodospirillaceae</taxon>
        <taxon>Rhodospirillum</taxon>
    </lineage>
</organism>